<reference key="1">
    <citation type="journal article" date="2000" name="Nature">
        <title>DNA sequence of both chromosomes of the cholera pathogen Vibrio cholerae.</title>
        <authorList>
            <person name="Heidelberg J.F."/>
            <person name="Eisen J.A."/>
            <person name="Nelson W.C."/>
            <person name="Clayton R.A."/>
            <person name="Gwinn M.L."/>
            <person name="Dodson R.J."/>
            <person name="Haft D.H."/>
            <person name="Hickey E.K."/>
            <person name="Peterson J.D."/>
            <person name="Umayam L.A."/>
            <person name="Gill S.R."/>
            <person name="Nelson K.E."/>
            <person name="Read T.D."/>
            <person name="Tettelin H."/>
            <person name="Richardson D.L."/>
            <person name="Ermolaeva M.D."/>
            <person name="Vamathevan J.J."/>
            <person name="Bass S."/>
            <person name="Qin H."/>
            <person name="Dragoi I."/>
            <person name="Sellers P."/>
            <person name="McDonald L.A."/>
            <person name="Utterback T.R."/>
            <person name="Fleischmann R.D."/>
            <person name="Nierman W.C."/>
            <person name="White O."/>
            <person name="Salzberg S.L."/>
            <person name="Smith H.O."/>
            <person name="Colwell R.R."/>
            <person name="Mekalanos J.J."/>
            <person name="Venter J.C."/>
            <person name="Fraser C.M."/>
        </authorList>
    </citation>
    <scope>NUCLEOTIDE SEQUENCE [LARGE SCALE GENOMIC DNA]</scope>
    <source>
        <strain>ATCC 39315 / El Tor Inaba N16961</strain>
    </source>
</reference>
<dbReference type="EMBL" id="AE003852">
    <property type="protein sequence ID" value="AAF95733.1"/>
    <property type="molecule type" value="Genomic_DNA"/>
</dbReference>
<dbReference type="PIR" id="B82059">
    <property type="entry name" value="B82059"/>
</dbReference>
<dbReference type="RefSeq" id="NP_232220.1">
    <property type="nucleotide sequence ID" value="NC_002505.1"/>
</dbReference>
<dbReference type="RefSeq" id="WP_001138114.1">
    <property type="nucleotide sequence ID" value="NZ_LT906614.1"/>
</dbReference>
<dbReference type="SMR" id="Q9KNY8"/>
<dbReference type="STRING" id="243277.VC_2592"/>
<dbReference type="DNASU" id="2615609"/>
<dbReference type="EnsemblBacteria" id="AAF95733">
    <property type="protein sequence ID" value="AAF95733"/>
    <property type="gene ID" value="VC_2592"/>
</dbReference>
<dbReference type="GeneID" id="94012756"/>
<dbReference type="KEGG" id="vch:VC_2592"/>
<dbReference type="PATRIC" id="fig|243277.26.peg.2471"/>
<dbReference type="eggNOG" id="COG0185">
    <property type="taxonomic scope" value="Bacteria"/>
</dbReference>
<dbReference type="HOGENOM" id="CLU_144911_0_1_6"/>
<dbReference type="Proteomes" id="UP000000584">
    <property type="component" value="Chromosome 1"/>
</dbReference>
<dbReference type="GO" id="GO:0005737">
    <property type="term" value="C:cytoplasm"/>
    <property type="evidence" value="ECO:0007669"/>
    <property type="project" value="UniProtKB-ARBA"/>
</dbReference>
<dbReference type="GO" id="GO:0015935">
    <property type="term" value="C:small ribosomal subunit"/>
    <property type="evidence" value="ECO:0007669"/>
    <property type="project" value="InterPro"/>
</dbReference>
<dbReference type="GO" id="GO:0019843">
    <property type="term" value="F:rRNA binding"/>
    <property type="evidence" value="ECO:0007669"/>
    <property type="project" value="UniProtKB-UniRule"/>
</dbReference>
<dbReference type="GO" id="GO:0003735">
    <property type="term" value="F:structural constituent of ribosome"/>
    <property type="evidence" value="ECO:0000318"/>
    <property type="project" value="GO_Central"/>
</dbReference>
<dbReference type="GO" id="GO:0000028">
    <property type="term" value="P:ribosomal small subunit assembly"/>
    <property type="evidence" value="ECO:0000318"/>
    <property type="project" value="GO_Central"/>
</dbReference>
<dbReference type="GO" id="GO:0006412">
    <property type="term" value="P:translation"/>
    <property type="evidence" value="ECO:0007669"/>
    <property type="project" value="UniProtKB-UniRule"/>
</dbReference>
<dbReference type="FunFam" id="3.30.860.10:FF:000001">
    <property type="entry name" value="30S ribosomal protein S19"/>
    <property type="match status" value="1"/>
</dbReference>
<dbReference type="Gene3D" id="3.30.860.10">
    <property type="entry name" value="30s Ribosomal Protein S19, Chain A"/>
    <property type="match status" value="1"/>
</dbReference>
<dbReference type="HAMAP" id="MF_00531">
    <property type="entry name" value="Ribosomal_uS19"/>
    <property type="match status" value="1"/>
</dbReference>
<dbReference type="InterPro" id="IPR002222">
    <property type="entry name" value="Ribosomal_uS19"/>
</dbReference>
<dbReference type="InterPro" id="IPR005732">
    <property type="entry name" value="Ribosomal_uS19_bac-type"/>
</dbReference>
<dbReference type="InterPro" id="IPR020934">
    <property type="entry name" value="Ribosomal_uS19_CS"/>
</dbReference>
<dbReference type="InterPro" id="IPR023575">
    <property type="entry name" value="Ribosomal_uS19_SF"/>
</dbReference>
<dbReference type="NCBIfam" id="TIGR01050">
    <property type="entry name" value="rpsS_bact"/>
    <property type="match status" value="1"/>
</dbReference>
<dbReference type="PANTHER" id="PTHR11880">
    <property type="entry name" value="RIBOSOMAL PROTEIN S19P FAMILY MEMBER"/>
    <property type="match status" value="1"/>
</dbReference>
<dbReference type="PANTHER" id="PTHR11880:SF8">
    <property type="entry name" value="SMALL RIBOSOMAL SUBUNIT PROTEIN US19M"/>
    <property type="match status" value="1"/>
</dbReference>
<dbReference type="Pfam" id="PF00203">
    <property type="entry name" value="Ribosomal_S19"/>
    <property type="match status" value="1"/>
</dbReference>
<dbReference type="PIRSF" id="PIRSF002144">
    <property type="entry name" value="Ribosomal_S19"/>
    <property type="match status" value="1"/>
</dbReference>
<dbReference type="PRINTS" id="PR00975">
    <property type="entry name" value="RIBOSOMALS19"/>
</dbReference>
<dbReference type="SUPFAM" id="SSF54570">
    <property type="entry name" value="Ribosomal protein S19"/>
    <property type="match status" value="1"/>
</dbReference>
<dbReference type="PROSITE" id="PS00323">
    <property type="entry name" value="RIBOSOMAL_S19"/>
    <property type="match status" value="1"/>
</dbReference>
<protein>
    <recommendedName>
        <fullName evidence="1">Small ribosomal subunit protein uS19</fullName>
    </recommendedName>
    <alternativeName>
        <fullName evidence="2">30S ribosomal protein S19</fullName>
    </alternativeName>
</protein>
<keyword id="KW-1185">Reference proteome</keyword>
<keyword id="KW-0687">Ribonucleoprotein</keyword>
<keyword id="KW-0689">Ribosomal protein</keyword>
<keyword id="KW-0694">RNA-binding</keyword>
<keyword id="KW-0699">rRNA-binding</keyword>
<name>RS19_VIBCH</name>
<accession>Q9KNY8</accession>
<sequence>MPRSLKKGPFIDLHLLKKVEKAVESGDKKPIKTWSRRSMIIPTMIGLTIAVHNGRQHVPVFVTDEMIGHKLGEFAPTRTYRGHAADKKAKKK</sequence>
<evidence type="ECO:0000255" key="1">
    <source>
        <dbReference type="HAMAP-Rule" id="MF_00531"/>
    </source>
</evidence>
<evidence type="ECO:0000305" key="2"/>
<feature type="chain" id="PRO_0000129936" description="Small ribosomal subunit protein uS19">
    <location>
        <begin position="1"/>
        <end position="92"/>
    </location>
</feature>
<organism>
    <name type="scientific">Vibrio cholerae serotype O1 (strain ATCC 39315 / El Tor Inaba N16961)</name>
    <dbReference type="NCBI Taxonomy" id="243277"/>
    <lineage>
        <taxon>Bacteria</taxon>
        <taxon>Pseudomonadati</taxon>
        <taxon>Pseudomonadota</taxon>
        <taxon>Gammaproteobacteria</taxon>
        <taxon>Vibrionales</taxon>
        <taxon>Vibrionaceae</taxon>
        <taxon>Vibrio</taxon>
    </lineage>
</organism>
<proteinExistence type="inferred from homology"/>
<comment type="function">
    <text evidence="1">Protein S19 forms a complex with S13 that binds strongly to the 16S ribosomal RNA.</text>
</comment>
<comment type="similarity">
    <text evidence="1">Belongs to the universal ribosomal protein uS19 family.</text>
</comment>
<gene>
    <name evidence="1" type="primary">rpsS</name>
    <name type="ordered locus">VC_2592</name>
</gene>